<comment type="function">
    <text evidence="1">Component of the nascent polypeptide-associated complex (NAC), a dynamic component of the ribosomal exit tunnel, protecting the emerging polypeptides from interaction with other cytoplasmic proteins to ensure appropriate nascent protein targeting. The NAC complex also promotes mitochondrial protein import by enhancing productive ribosome interactions with the outer mitochondrial membrane and blocks the inappropriate interaction of ribosomes translating non-secretory nascent polypeptides with translocation sites in the membrane of the endoplasmic reticulum. EGD1 may act as a transcription factor that exert a negative effect on the expression of several genes that are transcribed by RNA polymerase II.</text>
</comment>
<comment type="subunit">
    <text evidence="1">Part of the nascent polypeptide-associated complex (NAC), consisting of EGD2 and EGD1. NAC associates with ribosomes via EGD1 (By similarity).</text>
</comment>
<comment type="subcellular location">
    <subcellularLocation>
        <location evidence="1">Cytoplasm</location>
    </subcellularLocation>
    <subcellularLocation>
        <location evidence="1">Nucleus</location>
    </subcellularLocation>
    <text evidence="1">Predominantly cytoplasmic, may also transiently localize to the nucleus.</text>
</comment>
<comment type="similarity">
    <text evidence="4">Belongs to the NAC-beta family.</text>
</comment>
<feature type="chain" id="PRO_0000310167" description="Nascent polypeptide-associated complex subunit beta">
    <location>
        <begin position="1"/>
        <end position="159"/>
    </location>
</feature>
<feature type="domain" description="NAC-A/B" evidence="2">
    <location>
        <begin position="36"/>
        <end position="101"/>
    </location>
</feature>
<feature type="region of interest" description="Disordered" evidence="3">
    <location>
        <begin position="1"/>
        <end position="39"/>
    </location>
</feature>
<feature type="region of interest" description="Disordered" evidence="3">
    <location>
        <begin position="124"/>
        <end position="159"/>
    </location>
</feature>
<feature type="compositionally biased region" description="Basic residues" evidence="3">
    <location>
        <begin position="23"/>
        <end position="32"/>
    </location>
</feature>
<feature type="compositionally biased region" description="Acidic residues" evidence="3">
    <location>
        <begin position="136"/>
        <end position="153"/>
    </location>
</feature>
<name>NACB_SCLS1</name>
<proteinExistence type="inferred from homology"/>
<accession>A7F9B8</accession>
<dbReference type="EMBL" id="CH476650">
    <property type="protein sequence ID" value="EDO00329.1"/>
    <property type="molecule type" value="Genomic_DNA"/>
</dbReference>
<dbReference type="RefSeq" id="XP_001584916.1">
    <property type="nucleotide sequence ID" value="XM_001584866.1"/>
</dbReference>
<dbReference type="SMR" id="A7F9B8"/>
<dbReference type="FunCoup" id="A7F9B8">
    <property type="interactions" value="1158"/>
</dbReference>
<dbReference type="STRING" id="665079.A7F9B8"/>
<dbReference type="GeneID" id="5480911"/>
<dbReference type="KEGG" id="ssl:SS1G_14199"/>
<dbReference type="VEuPathDB" id="FungiDB:sscle_08g068110"/>
<dbReference type="InParanoid" id="A7F9B8"/>
<dbReference type="OMA" id="RMQQSVR"/>
<dbReference type="OrthoDB" id="8033832at2759"/>
<dbReference type="Proteomes" id="UP000001312">
    <property type="component" value="Unassembled WGS sequence"/>
</dbReference>
<dbReference type="GO" id="GO:0005829">
    <property type="term" value="C:cytosol"/>
    <property type="evidence" value="ECO:0000318"/>
    <property type="project" value="GO_Central"/>
</dbReference>
<dbReference type="GO" id="GO:0005854">
    <property type="term" value="C:nascent polypeptide-associated complex"/>
    <property type="evidence" value="ECO:0000318"/>
    <property type="project" value="GO_Central"/>
</dbReference>
<dbReference type="GO" id="GO:0005634">
    <property type="term" value="C:nucleus"/>
    <property type="evidence" value="ECO:0007669"/>
    <property type="project" value="UniProtKB-SubCell"/>
</dbReference>
<dbReference type="GO" id="GO:0015031">
    <property type="term" value="P:protein transport"/>
    <property type="evidence" value="ECO:0007669"/>
    <property type="project" value="UniProtKB-KW"/>
</dbReference>
<dbReference type="CDD" id="cd22055">
    <property type="entry name" value="NAC_BTF3"/>
    <property type="match status" value="1"/>
</dbReference>
<dbReference type="FunFam" id="2.20.70.30:FF:000003">
    <property type="entry name" value="Nascent polypeptide-associated complex subunit beta"/>
    <property type="match status" value="1"/>
</dbReference>
<dbReference type="Gene3D" id="2.20.70.30">
    <property type="entry name" value="Nascent polypeptide-associated complex domain"/>
    <property type="match status" value="1"/>
</dbReference>
<dbReference type="InterPro" id="IPR039370">
    <property type="entry name" value="BTF3"/>
</dbReference>
<dbReference type="InterPro" id="IPR038187">
    <property type="entry name" value="NAC_A/B_dom_sf"/>
</dbReference>
<dbReference type="InterPro" id="IPR002715">
    <property type="entry name" value="Nas_poly-pep-assoc_cplx_dom"/>
</dbReference>
<dbReference type="PANTHER" id="PTHR10351">
    <property type="entry name" value="TRANSCRIPTION FACTOR BTF3 FAMILY MEMBER"/>
    <property type="match status" value="1"/>
</dbReference>
<dbReference type="Pfam" id="PF01849">
    <property type="entry name" value="NAC"/>
    <property type="match status" value="1"/>
</dbReference>
<dbReference type="SMART" id="SM01407">
    <property type="entry name" value="NAC"/>
    <property type="match status" value="1"/>
</dbReference>
<dbReference type="PROSITE" id="PS51151">
    <property type="entry name" value="NAC_AB"/>
    <property type="match status" value="1"/>
</dbReference>
<sequence length="159" mass="17598">MDMEKLKRMQARGGVRTGDGKGTPRRKVKNVHKSTGMDDKKLQTSLKKLNVQPIQAIEEVNMFKSDGNVIHFAAPKVHAAVPSNTFAIYGNGEDKELTELVPGILNQLGPDSLASLRKLAESYQSMQKAEGGEEKKDDEEDDDDIPDLVEGENFEDKVE</sequence>
<evidence type="ECO:0000250" key="1"/>
<evidence type="ECO:0000255" key="2">
    <source>
        <dbReference type="PROSITE-ProRule" id="PRU00507"/>
    </source>
</evidence>
<evidence type="ECO:0000256" key="3">
    <source>
        <dbReference type="SAM" id="MobiDB-lite"/>
    </source>
</evidence>
<evidence type="ECO:0000305" key="4"/>
<protein>
    <recommendedName>
        <fullName>Nascent polypeptide-associated complex subunit beta</fullName>
        <shortName>NAC-beta</shortName>
    </recommendedName>
    <alternativeName>
        <fullName>Beta-NAC</fullName>
    </alternativeName>
</protein>
<organism>
    <name type="scientific">Sclerotinia sclerotiorum (strain ATCC 18683 / 1980 / Ss-1)</name>
    <name type="common">White mold</name>
    <name type="synonym">Whetzelinia sclerotiorum</name>
    <dbReference type="NCBI Taxonomy" id="665079"/>
    <lineage>
        <taxon>Eukaryota</taxon>
        <taxon>Fungi</taxon>
        <taxon>Dikarya</taxon>
        <taxon>Ascomycota</taxon>
        <taxon>Pezizomycotina</taxon>
        <taxon>Leotiomycetes</taxon>
        <taxon>Helotiales</taxon>
        <taxon>Sclerotiniaceae</taxon>
        <taxon>Sclerotinia</taxon>
    </lineage>
</organism>
<reference key="1">
    <citation type="journal article" date="2011" name="PLoS Genet.">
        <title>Genomic analysis of the necrotrophic fungal pathogens Sclerotinia sclerotiorum and Botrytis cinerea.</title>
        <authorList>
            <person name="Amselem J."/>
            <person name="Cuomo C.A."/>
            <person name="van Kan J.A.L."/>
            <person name="Viaud M."/>
            <person name="Benito E.P."/>
            <person name="Couloux A."/>
            <person name="Coutinho P.M."/>
            <person name="de Vries R.P."/>
            <person name="Dyer P.S."/>
            <person name="Fillinger S."/>
            <person name="Fournier E."/>
            <person name="Gout L."/>
            <person name="Hahn M."/>
            <person name="Kohn L."/>
            <person name="Lapalu N."/>
            <person name="Plummer K.M."/>
            <person name="Pradier J.-M."/>
            <person name="Quevillon E."/>
            <person name="Sharon A."/>
            <person name="Simon A."/>
            <person name="ten Have A."/>
            <person name="Tudzynski B."/>
            <person name="Tudzynski P."/>
            <person name="Wincker P."/>
            <person name="Andrew M."/>
            <person name="Anthouard V."/>
            <person name="Beever R.E."/>
            <person name="Beffa R."/>
            <person name="Benoit I."/>
            <person name="Bouzid O."/>
            <person name="Brault B."/>
            <person name="Chen Z."/>
            <person name="Choquer M."/>
            <person name="Collemare J."/>
            <person name="Cotton P."/>
            <person name="Danchin E.G."/>
            <person name="Da Silva C."/>
            <person name="Gautier A."/>
            <person name="Giraud C."/>
            <person name="Giraud T."/>
            <person name="Gonzalez C."/>
            <person name="Grossetete S."/>
            <person name="Gueldener U."/>
            <person name="Henrissat B."/>
            <person name="Howlett B.J."/>
            <person name="Kodira C."/>
            <person name="Kretschmer M."/>
            <person name="Lappartient A."/>
            <person name="Leroch M."/>
            <person name="Levis C."/>
            <person name="Mauceli E."/>
            <person name="Neuveglise C."/>
            <person name="Oeser B."/>
            <person name="Pearson M."/>
            <person name="Poulain J."/>
            <person name="Poussereau N."/>
            <person name="Quesneville H."/>
            <person name="Rascle C."/>
            <person name="Schumacher J."/>
            <person name="Segurens B."/>
            <person name="Sexton A."/>
            <person name="Silva E."/>
            <person name="Sirven C."/>
            <person name="Soanes D.M."/>
            <person name="Talbot N.J."/>
            <person name="Templeton M."/>
            <person name="Yandava C."/>
            <person name="Yarden O."/>
            <person name="Zeng Q."/>
            <person name="Rollins J.A."/>
            <person name="Lebrun M.-H."/>
            <person name="Dickman M."/>
        </authorList>
    </citation>
    <scope>NUCLEOTIDE SEQUENCE [LARGE SCALE GENOMIC DNA]</scope>
    <source>
        <strain>ATCC 18683 / 1980 / Ss-1</strain>
    </source>
</reference>
<keyword id="KW-0963">Cytoplasm</keyword>
<keyword id="KW-0539">Nucleus</keyword>
<keyword id="KW-0653">Protein transport</keyword>
<keyword id="KW-1185">Reference proteome</keyword>
<keyword id="KW-0678">Repressor</keyword>
<keyword id="KW-0804">Transcription</keyword>
<keyword id="KW-0805">Transcription regulation</keyword>
<keyword id="KW-0813">Transport</keyword>
<gene>
    <name type="primary">egd1</name>
    <name type="ORF">SS1G_14199</name>
</gene>